<accession>Q4WZJ2</accession>
<gene>
    <name type="primary">atp25</name>
    <name type="ORF">AFUA_2G16740</name>
</gene>
<reference key="1">
    <citation type="journal article" date="2005" name="Nature">
        <title>Genomic sequence of the pathogenic and allergenic filamentous fungus Aspergillus fumigatus.</title>
        <authorList>
            <person name="Nierman W.C."/>
            <person name="Pain A."/>
            <person name="Anderson M.J."/>
            <person name="Wortman J.R."/>
            <person name="Kim H.S."/>
            <person name="Arroyo J."/>
            <person name="Berriman M."/>
            <person name="Abe K."/>
            <person name="Archer D.B."/>
            <person name="Bermejo C."/>
            <person name="Bennett J.W."/>
            <person name="Bowyer P."/>
            <person name="Chen D."/>
            <person name="Collins M."/>
            <person name="Coulsen R."/>
            <person name="Davies R."/>
            <person name="Dyer P.S."/>
            <person name="Farman M.L."/>
            <person name="Fedorova N."/>
            <person name="Fedorova N.D."/>
            <person name="Feldblyum T.V."/>
            <person name="Fischer R."/>
            <person name="Fosker N."/>
            <person name="Fraser A."/>
            <person name="Garcia J.L."/>
            <person name="Garcia M.J."/>
            <person name="Goble A."/>
            <person name="Goldman G.H."/>
            <person name="Gomi K."/>
            <person name="Griffith-Jones S."/>
            <person name="Gwilliam R."/>
            <person name="Haas B.J."/>
            <person name="Haas H."/>
            <person name="Harris D.E."/>
            <person name="Horiuchi H."/>
            <person name="Huang J."/>
            <person name="Humphray S."/>
            <person name="Jimenez J."/>
            <person name="Keller N."/>
            <person name="Khouri H."/>
            <person name="Kitamoto K."/>
            <person name="Kobayashi T."/>
            <person name="Konzack S."/>
            <person name="Kulkarni R."/>
            <person name="Kumagai T."/>
            <person name="Lafton A."/>
            <person name="Latge J.-P."/>
            <person name="Li W."/>
            <person name="Lord A."/>
            <person name="Lu C."/>
            <person name="Majoros W.H."/>
            <person name="May G.S."/>
            <person name="Miller B.L."/>
            <person name="Mohamoud Y."/>
            <person name="Molina M."/>
            <person name="Monod M."/>
            <person name="Mouyna I."/>
            <person name="Mulligan S."/>
            <person name="Murphy L.D."/>
            <person name="O'Neil S."/>
            <person name="Paulsen I."/>
            <person name="Penalva M.A."/>
            <person name="Pertea M."/>
            <person name="Price C."/>
            <person name="Pritchard B.L."/>
            <person name="Quail M.A."/>
            <person name="Rabbinowitsch E."/>
            <person name="Rawlins N."/>
            <person name="Rajandream M.A."/>
            <person name="Reichard U."/>
            <person name="Renauld H."/>
            <person name="Robson G.D."/>
            <person name="Rodriguez de Cordoba S."/>
            <person name="Rodriguez-Pena J.M."/>
            <person name="Ronning C.M."/>
            <person name="Rutter S."/>
            <person name="Salzberg S.L."/>
            <person name="Sanchez M."/>
            <person name="Sanchez-Ferrero J.C."/>
            <person name="Saunders D."/>
            <person name="Seeger K."/>
            <person name="Squares R."/>
            <person name="Squares S."/>
            <person name="Takeuchi M."/>
            <person name="Tekaia F."/>
            <person name="Turner G."/>
            <person name="Vazquez de Aldana C.R."/>
            <person name="Weidman J."/>
            <person name="White O."/>
            <person name="Woodward J.R."/>
            <person name="Yu J.-H."/>
            <person name="Fraser C.M."/>
            <person name="Galagan J.E."/>
            <person name="Asai K."/>
            <person name="Machida M."/>
            <person name="Hall N."/>
            <person name="Barrell B.G."/>
            <person name="Denning D.W."/>
        </authorList>
    </citation>
    <scope>NUCLEOTIDE SEQUENCE [LARGE SCALE GENOMIC DNA]</scope>
    <source>
        <strain>ATCC MYA-4609 / CBS 101355 / FGSC A1100 / Af293</strain>
    </source>
</reference>
<dbReference type="EMBL" id="AAHF01000001">
    <property type="protein sequence ID" value="EAL93973.1"/>
    <property type="molecule type" value="Genomic_DNA"/>
</dbReference>
<dbReference type="RefSeq" id="XP_756011.1">
    <property type="nucleotide sequence ID" value="XM_750918.1"/>
</dbReference>
<dbReference type="SMR" id="Q4WZJ2"/>
<dbReference type="STRING" id="330879.Q4WZJ2"/>
<dbReference type="EnsemblFungi" id="EAL93973">
    <property type="protein sequence ID" value="EAL93973"/>
    <property type="gene ID" value="AFUA_2G16740"/>
</dbReference>
<dbReference type="GeneID" id="3513360"/>
<dbReference type="KEGG" id="afm:AFUA_2G16740"/>
<dbReference type="VEuPathDB" id="FungiDB:Afu2g16740"/>
<dbReference type="eggNOG" id="ENOG502S5IB">
    <property type="taxonomic scope" value="Eukaryota"/>
</dbReference>
<dbReference type="HOGENOM" id="CLU_016140_0_0_1"/>
<dbReference type="InParanoid" id="Q4WZJ2"/>
<dbReference type="OMA" id="CLSSWVP"/>
<dbReference type="OrthoDB" id="107372at2759"/>
<dbReference type="Proteomes" id="UP000002530">
    <property type="component" value="Chromosome 2"/>
</dbReference>
<dbReference type="GO" id="GO:0005743">
    <property type="term" value="C:mitochondrial inner membrane"/>
    <property type="evidence" value="ECO:0007669"/>
    <property type="project" value="UniProtKB-SubCell"/>
</dbReference>
<dbReference type="GO" id="GO:0005739">
    <property type="term" value="C:mitochondrion"/>
    <property type="evidence" value="ECO:0000318"/>
    <property type="project" value="GO_Central"/>
</dbReference>
<dbReference type="GO" id="GO:0140053">
    <property type="term" value="P:mitochondrial gene expression"/>
    <property type="evidence" value="ECO:0007669"/>
    <property type="project" value="InterPro"/>
</dbReference>
<dbReference type="GO" id="GO:0048255">
    <property type="term" value="P:mRNA stabilization"/>
    <property type="evidence" value="ECO:0000318"/>
    <property type="project" value="GO_Central"/>
</dbReference>
<dbReference type="FunFam" id="3.30.460.10:FF:000044">
    <property type="entry name" value="ATPase synthesis protein 25, mitochondrial"/>
    <property type="match status" value="1"/>
</dbReference>
<dbReference type="Gene3D" id="3.30.460.10">
    <property type="entry name" value="Beta Polymerase, domain 2"/>
    <property type="match status" value="1"/>
</dbReference>
<dbReference type="InterPro" id="IPR040152">
    <property type="entry name" value="Atp25"/>
</dbReference>
<dbReference type="InterPro" id="IPR043519">
    <property type="entry name" value="NT_sf"/>
</dbReference>
<dbReference type="PANTHER" id="PTHR28087">
    <property type="entry name" value="ATPASE SYNTHESIS PROTEIN 25, MITOCHONDRIAL"/>
    <property type="match status" value="1"/>
</dbReference>
<dbReference type="PANTHER" id="PTHR28087:SF1">
    <property type="entry name" value="ATPASE SYNTHESIS PROTEIN 25, MITOCHONDRIAL"/>
    <property type="match status" value="1"/>
</dbReference>
<dbReference type="SUPFAM" id="SSF81301">
    <property type="entry name" value="Nucleotidyltransferase"/>
    <property type="match status" value="1"/>
</dbReference>
<name>ATP25_ASPFU</name>
<keyword id="KW-0472">Membrane</keyword>
<keyword id="KW-0496">Mitochondrion</keyword>
<keyword id="KW-0999">Mitochondrion inner membrane</keyword>
<keyword id="KW-1185">Reference proteome</keyword>
<keyword id="KW-0809">Transit peptide</keyword>
<evidence type="ECO:0000250" key="1"/>
<evidence type="ECO:0000255" key="2"/>
<evidence type="ECO:0000256" key="3">
    <source>
        <dbReference type="SAM" id="MobiDB-lite"/>
    </source>
</evidence>
<evidence type="ECO:0000305" key="4"/>
<comment type="function">
    <text evidence="1">Probable mitochondrial mRNA stabilization factor.</text>
</comment>
<comment type="subcellular location">
    <subcellularLocation>
        <location evidence="1">Mitochondrion inner membrane</location>
        <topology evidence="1">Peripheral membrane protein</topology>
        <orientation evidence="1">Matrix side</orientation>
    </subcellularLocation>
</comment>
<comment type="similarity">
    <text evidence="4">Belongs to the ATP25 family.</text>
</comment>
<sequence length="704" mass="78535">MNRVLSKGPKGLNGLLRACPSNSGRSFLYHSTYNVSSRTFWSASRLRSEDSPSGSQPLKPDPNDGIGNNTSSASSQHTPWYLQEEALIEEPRQISSRDQIPELPENSPAILPVLLDYIFKDLGLDELRSIDLRGLETPPPIGANSIMIIGTARSVKHLNVSADRLCRWLRSTYKLTPYADGLLGRNELKIKLRRKARRARVASRAGTTVDEKDDGITTGWICVNAGVVENSPVGEQASRKVEGFGNIVGGTRVVVQMFTEEKRAEVDLEGLWLATIERDRRQKQVSIDTKSDAPHEEVRAPTPVQNSSSDHVFGPHCRSSTILPLEQRRGLHSKCRLLGPETEHNQEDGLDDGLDDGLDMSPDSISTPTDQLAANRTCDKEVDTDSLLEHLSGLPDEQVLSELGAGQEDRDSTPFLRRFYDALSQMSTEEAAVARVKLLCTAISRHHQGYSKESLWKAFMTCNYHTYPISDELGFEIVSALLTALPPHQKGPKATGVLPEADRELALRVLEHLSLRGTDVLNMKVFHLLYEAASHPTSFSGEEVIKDVTDATKDRPTSRVAKMIESLDIQFDPEDARKLMMSMFRNGDYDGFWNLWHKLPLYGSPRTSADYEMLFRLHADLRDECRARDCVSTWVPMMSREHPPIPLRGQVVQDIMHCLLIGEPAIDRMARAGSTSNLVLIWNDCKNIALGRGRRGSVERMNVV</sequence>
<proteinExistence type="inferred from homology"/>
<protein>
    <recommendedName>
        <fullName>ATPase synthesis protein 25, mitochondrial</fullName>
    </recommendedName>
</protein>
<feature type="transit peptide" description="Mitochondrion" evidence="2">
    <location>
        <begin position="1"/>
        <end position="47"/>
    </location>
</feature>
<feature type="chain" id="PRO_0000404462" description="ATPase synthesis protein 25, mitochondrial">
    <location>
        <begin position="48"/>
        <end position="704"/>
    </location>
</feature>
<feature type="region of interest" description="Disordered" evidence="3">
    <location>
        <begin position="47"/>
        <end position="76"/>
    </location>
</feature>
<feature type="region of interest" description="Disordered" evidence="3">
    <location>
        <begin position="283"/>
        <end position="313"/>
    </location>
</feature>
<feature type="compositionally biased region" description="Polar residues" evidence="3">
    <location>
        <begin position="66"/>
        <end position="76"/>
    </location>
</feature>
<feature type="compositionally biased region" description="Basic and acidic residues" evidence="3">
    <location>
        <begin position="289"/>
        <end position="299"/>
    </location>
</feature>
<organism>
    <name type="scientific">Aspergillus fumigatus (strain ATCC MYA-4609 / CBS 101355 / FGSC A1100 / Af293)</name>
    <name type="common">Neosartorya fumigata</name>
    <dbReference type="NCBI Taxonomy" id="330879"/>
    <lineage>
        <taxon>Eukaryota</taxon>
        <taxon>Fungi</taxon>
        <taxon>Dikarya</taxon>
        <taxon>Ascomycota</taxon>
        <taxon>Pezizomycotina</taxon>
        <taxon>Eurotiomycetes</taxon>
        <taxon>Eurotiomycetidae</taxon>
        <taxon>Eurotiales</taxon>
        <taxon>Aspergillaceae</taxon>
        <taxon>Aspergillus</taxon>
        <taxon>Aspergillus subgen. Fumigati</taxon>
    </lineage>
</organism>